<sequence>MTDPRHTVRIAVGATALGVSALGATLPACSAHSGPGSPPSAPSAPAAATVMVEGHTHTISGVVECRTSPAVRTATPSESGTQTTRVNAHDDSASVTLSLSDSTPPDVNGFGISLKIGSVDYQMPYQPVQSPTQVEATRQGKSYTLTGTGHAVIPGQTGMRELPFGVHVTCP</sequence>
<protein>
    <recommendedName>
        <fullName>Putative lipoprotein LppO</fullName>
    </recommendedName>
</protein>
<evidence type="ECO:0000250" key="1"/>
<evidence type="ECO:0000255" key="2"/>
<evidence type="ECO:0000305" key="3"/>
<name>LPPO_MYCTO</name>
<reference key="1">
    <citation type="journal article" date="2002" name="J. Bacteriol.">
        <title>Whole-genome comparison of Mycobacterium tuberculosis clinical and laboratory strains.</title>
        <authorList>
            <person name="Fleischmann R.D."/>
            <person name="Alland D."/>
            <person name="Eisen J.A."/>
            <person name="Carpenter L."/>
            <person name="White O."/>
            <person name="Peterson J.D."/>
            <person name="DeBoy R.T."/>
            <person name="Dodson R.J."/>
            <person name="Gwinn M.L."/>
            <person name="Haft D.H."/>
            <person name="Hickey E.K."/>
            <person name="Kolonay J.F."/>
            <person name="Nelson W.C."/>
            <person name="Umayam L.A."/>
            <person name="Ermolaeva M.D."/>
            <person name="Salzberg S.L."/>
            <person name="Delcher A."/>
            <person name="Utterback T.R."/>
            <person name="Weidman J.F."/>
            <person name="Khouri H.M."/>
            <person name="Gill J."/>
            <person name="Mikula A."/>
            <person name="Bishai W."/>
            <person name="Jacobs W.R. Jr."/>
            <person name="Venter J.C."/>
            <person name="Fraser C.M."/>
        </authorList>
    </citation>
    <scope>NUCLEOTIDE SEQUENCE [LARGE SCALE GENOMIC DNA]</scope>
    <source>
        <strain>CDC 1551 / Oshkosh</strain>
    </source>
</reference>
<keyword id="KW-1003">Cell membrane</keyword>
<keyword id="KW-0449">Lipoprotein</keyword>
<keyword id="KW-0472">Membrane</keyword>
<keyword id="KW-0564">Palmitate</keyword>
<keyword id="KW-1185">Reference proteome</keyword>
<keyword id="KW-0732">Signal</keyword>
<comment type="subcellular location">
    <subcellularLocation>
        <location evidence="3">Cell membrane</location>
        <topology evidence="3">Lipid-anchor</topology>
    </subcellularLocation>
</comment>
<comment type="sequence caution" evidence="3">
    <conflict type="erroneous initiation">
        <sequence resource="EMBL-CDS" id="AAK46632"/>
    </conflict>
</comment>
<dbReference type="EMBL" id="AE000516">
    <property type="protein sequence ID" value="AAK46632.1"/>
    <property type="status" value="ALT_INIT"/>
    <property type="molecule type" value="Genomic_DNA"/>
</dbReference>
<dbReference type="PIR" id="F70732">
    <property type="entry name" value="F70732"/>
</dbReference>
<dbReference type="RefSeq" id="WP_003900493.1">
    <property type="nucleotide sequence ID" value="NZ_KK341227.1"/>
</dbReference>
<dbReference type="SMR" id="P9WK70"/>
<dbReference type="KEGG" id="mtc:MT2347"/>
<dbReference type="PATRIC" id="fig|83331.31.peg.2526"/>
<dbReference type="HOGENOM" id="CLU_133759_0_0_11"/>
<dbReference type="Proteomes" id="UP000001020">
    <property type="component" value="Chromosome"/>
</dbReference>
<dbReference type="GO" id="GO:0005886">
    <property type="term" value="C:plasma membrane"/>
    <property type="evidence" value="ECO:0007669"/>
    <property type="project" value="UniProtKB-SubCell"/>
</dbReference>
<dbReference type="InterPro" id="IPR008691">
    <property type="entry name" value="LpqH"/>
</dbReference>
<dbReference type="Pfam" id="PF05481">
    <property type="entry name" value="Myco_19_kDa"/>
    <property type="match status" value="1"/>
</dbReference>
<feature type="signal peptide" evidence="2">
    <location>
        <begin position="1"/>
        <end position="28"/>
    </location>
</feature>
<feature type="chain" id="PRO_0000427705" description="Putative lipoprotein LppO">
    <location>
        <begin position="29"/>
        <end position="171"/>
    </location>
</feature>
<feature type="lipid moiety-binding region" description="N-palmitoyl cysteine" evidence="1">
    <location>
        <position position="29"/>
    </location>
</feature>
<feature type="lipid moiety-binding region" description="S-diacylglycerol cysteine" evidence="1">
    <location>
        <position position="29"/>
    </location>
</feature>
<proteinExistence type="inferred from homology"/>
<gene>
    <name type="primary">lppO</name>
    <name type="ordered locus">MT2347</name>
</gene>
<organism>
    <name type="scientific">Mycobacterium tuberculosis (strain CDC 1551 / Oshkosh)</name>
    <dbReference type="NCBI Taxonomy" id="83331"/>
    <lineage>
        <taxon>Bacteria</taxon>
        <taxon>Bacillati</taxon>
        <taxon>Actinomycetota</taxon>
        <taxon>Actinomycetes</taxon>
        <taxon>Mycobacteriales</taxon>
        <taxon>Mycobacteriaceae</taxon>
        <taxon>Mycobacterium</taxon>
        <taxon>Mycobacterium tuberculosis complex</taxon>
    </lineage>
</organism>
<accession>P9WK70</accession>
<accession>L0TBV2</accession>
<accession>Q50675</accession>